<organism>
    <name type="scientific">Dictyostelium discoideum</name>
    <name type="common">Social amoeba</name>
    <dbReference type="NCBI Taxonomy" id="44689"/>
    <lineage>
        <taxon>Eukaryota</taxon>
        <taxon>Amoebozoa</taxon>
        <taxon>Evosea</taxon>
        <taxon>Eumycetozoa</taxon>
        <taxon>Dictyostelia</taxon>
        <taxon>Dictyosteliales</taxon>
        <taxon>Dictyosteliaceae</taxon>
        <taxon>Dictyostelium</taxon>
    </lineage>
</organism>
<comment type="function">
    <text evidence="1">May function in protein folding and assembly, and disassembly of protein complexes.</text>
</comment>
<comment type="developmental stage">
    <text evidence="3">Expressed at low levels at earlier developmental stages and induced at high levels during culmination dependent on transcription factor srfA.</text>
</comment>
<comment type="similarity">
    <text evidence="4">Belongs to the heat shock protein 70 family.</text>
</comment>
<feature type="chain" id="PRO_0000327976" description="Heat shock protein 88">
    <location>
        <begin position="1"/>
        <end position="772"/>
    </location>
</feature>
<feature type="region of interest" description="Disordered" evidence="2">
    <location>
        <begin position="496"/>
        <end position="519"/>
    </location>
</feature>
<feature type="region of interest" description="Disordered" evidence="2">
    <location>
        <begin position="729"/>
        <end position="772"/>
    </location>
</feature>
<feature type="compositionally biased region" description="Low complexity" evidence="2">
    <location>
        <begin position="497"/>
        <end position="513"/>
    </location>
</feature>
<feature type="compositionally biased region" description="Basic and acidic residues" evidence="2">
    <location>
        <begin position="735"/>
        <end position="772"/>
    </location>
</feature>
<protein>
    <recommendedName>
        <fullName>Heat shock protein 88</fullName>
    </recommendedName>
    <alternativeName>
        <fullName>Heat shock 70-related protein</fullName>
    </alternativeName>
</protein>
<sequence length="772" mass="86008">MSFVVGFDFGTKNCTIAVAQKGGVDVIANEVSNRLTPSMVSFGEKERYLGESALTNQLRNIRNTITNIKRFIGQEFKTDTVQEELKHEMFQSYEMDNGFVGYNVTYAGEQCSFSSEAILGMLFGKLKKTTEAFVNNPVRDVVISVPVFWNDYQRRAILNAGSIAGLNIIRLINETTATALSYGIYKEWSETDPTNVLFVDVGDSATSVSAVQYKKGQLKVLGTASNPNIGSRVFDETLVKHFAKEFQTKYKINVFENKKALIRLRQACEKVKKILSSNNEAPVSIDSLMDDKDVKGMIDRATFEELANDDMNTIVEPLQRLLSELQMTPDQFQSIEITGGGTRSTSLQKKLSEVLGRDLSKTINSEESVCRGAALQCAMLSPVFRVRPFAVNDVASYPVSVHFKSVSGVEQKLDLFNLKSAIPTPKPLRISFPVTKAEGFEIVVNSTFGTIATVKVDNIPAFTNKSSIKAKVWLDIHGIFHIDEVKLVEQIPEEETAAPAETPAETPANGEAAKPAEEKKVKVKETSLVFTTSRKGLTNELLKAAIEEEGRMQASDLLAIETAEKKNALESYIYDMRSKLQSSLKEYVTPADAETFMTQLNKQMDWLESEEGEDQTKSVYAGKLEELRRLGNPIQKRKQDLEDYPDAVQTLKNIASYVKNEAMIPGERYDHIEKEEKEKLCKDCDDAVEWIDALVAKQQATPKTQPCIINTTEVLAKKTQLEVTAKMILGKPKPKPVEVPKEEPKDTPMESKDAPAEEPVATKDQKMDDILD</sequence>
<keyword id="KW-0067">ATP-binding</keyword>
<keyword id="KW-0143">Chaperone</keyword>
<keyword id="KW-0547">Nucleotide-binding</keyword>
<keyword id="KW-1185">Reference proteome</keyword>
<keyword id="KW-0346">Stress response</keyword>
<name>HSP88_DICDI</name>
<gene>
    <name type="primary">hspH</name>
    <name type="ORF">DDB_G0290187</name>
</gene>
<reference key="1">
    <citation type="journal article" date="2004" name="Eukaryot. Cell">
        <title>Identification of genes dependent on the MADS box transcription factor SrfA in Dictyostelium discoideum development.</title>
        <authorList>
            <person name="Escalante R."/>
            <person name="Iranfar N."/>
            <person name="Sastre L."/>
            <person name="Loomis W.F."/>
        </authorList>
    </citation>
    <scope>NUCLEOTIDE SEQUENCE [GENOMIC DNA]</scope>
    <scope>DEVELOPMENTAL STAGE</scope>
</reference>
<reference key="2">
    <citation type="journal article" date="2005" name="Nature">
        <title>The genome of the social amoeba Dictyostelium discoideum.</title>
        <authorList>
            <person name="Eichinger L."/>
            <person name="Pachebat J.A."/>
            <person name="Gloeckner G."/>
            <person name="Rajandream M.A."/>
            <person name="Sucgang R."/>
            <person name="Berriman M."/>
            <person name="Song J."/>
            <person name="Olsen R."/>
            <person name="Szafranski K."/>
            <person name="Xu Q."/>
            <person name="Tunggal B."/>
            <person name="Kummerfeld S."/>
            <person name="Madera M."/>
            <person name="Konfortov B.A."/>
            <person name="Rivero F."/>
            <person name="Bankier A.T."/>
            <person name="Lehmann R."/>
            <person name="Hamlin N."/>
            <person name="Davies R."/>
            <person name="Gaudet P."/>
            <person name="Fey P."/>
            <person name="Pilcher K."/>
            <person name="Chen G."/>
            <person name="Saunders D."/>
            <person name="Sodergren E.J."/>
            <person name="Davis P."/>
            <person name="Kerhornou A."/>
            <person name="Nie X."/>
            <person name="Hall N."/>
            <person name="Anjard C."/>
            <person name="Hemphill L."/>
            <person name="Bason N."/>
            <person name="Farbrother P."/>
            <person name="Desany B."/>
            <person name="Just E."/>
            <person name="Morio T."/>
            <person name="Rost R."/>
            <person name="Churcher C.M."/>
            <person name="Cooper J."/>
            <person name="Haydock S."/>
            <person name="van Driessche N."/>
            <person name="Cronin A."/>
            <person name="Goodhead I."/>
            <person name="Muzny D.M."/>
            <person name="Mourier T."/>
            <person name="Pain A."/>
            <person name="Lu M."/>
            <person name="Harper D."/>
            <person name="Lindsay R."/>
            <person name="Hauser H."/>
            <person name="James K.D."/>
            <person name="Quiles M."/>
            <person name="Madan Babu M."/>
            <person name="Saito T."/>
            <person name="Buchrieser C."/>
            <person name="Wardroper A."/>
            <person name="Felder M."/>
            <person name="Thangavelu M."/>
            <person name="Johnson D."/>
            <person name="Knights A."/>
            <person name="Loulseged H."/>
            <person name="Mungall K.L."/>
            <person name="Oliver K."/>
            <person name="Price C."/>
            <person name="Quail M.A."/>
            <person name="Urushihara H."/>
            <person name="Hernandez J."/>
            <person name="Rabbinowitsch E."/>
            <person name="Steffen D."/>
            <person name="Sanders M."/>
            <person name="Ma J."/>
            <person name="Kohara Y."/>
            <person name="Sharp S."/>
            <person name="Simmonds M.N."/>
            <person name="Spiegler S."/>
            <person name="Tivey A."/>
            <person name="Sugano S."/>
            <person name="White B."/>
            <person name="Walker D."/>
            <person name="Woodward J.R."/>
            <person name="Winckler T."/>
            <person name="Tanaka Y."/>
            <person name="Shaulsky G."/>
            <person name="Schleicher M."/>
            <person name="Weinstock G.M."/>
            <person name="Rosenthal A."/>
            <person name="Cox E.C."/>
            <person name="Chisholm R.L."/>
            <person name="Gibbs R.A."/>
            <person name="Loomis W.F."/>
            <person name="Platzer M."/>
            <person name="Kay R.R."/>
            <person name="Williams J.G."/>
            <person name="Dear P.H."/>
            <person name="Noegel A.A."/>
            <person name="Barrell B.G."/>
            <person name="Kuspa A."/>
        </authorList>
    </citation>
    <scope>NUCLEOTIDE SEQUENCE [LARGE SCALE GENOMIC DNA]</scope>
    <source>
        <strain>AX4</strain>
    </source>
</reference>
<reference key="3">
    <citation type="journal article" date="2006" name="Mol. Cell. Proteomics">
        <title>Proteomics fingerprinting of phagosome maturation and evidence for the role of a Galpha during uptake.</title>
        <authorList>
            <person name="Gotthardt D."/>
            <person name="Blancheteau V."/>
            <person name="Bosserhoff A."/>
            <person name="Ruppert T."/>
            <person name="Delorenzi M."/>
            <person name="Soldati T."/>
        </authorList>
    </citation>
    <scope>IDENTIFICATION BY MASS SPECTROMETRY [LARGE SCALE ANALYSIS]</scope>
    <source>
        <strain>AX2</strain>
    </source>
</reference>
<proteinExistence type="evidence at protein level"/>
<evidence type="ECO:0000250" key="1"/>
<evidence type="ECO:0000256" key="2">
    <source>
        <dbReference type="SAM" id="MobiDB-lite"/>
    </source>
</evidence>
<evidence type="ECO:0000269" key="3">
    <source>
    </source>
</evidence>
<evidence type="ECO:0000305" key="4"/>
<accession>Q6TMK3</accession>
<accession>Q54GD7</accession>
<dbReference type="EMBL" id="AY392430">
    <property type="protein sequence ID" value="AAQ98872.1"/>
    <property type="molecule type" value="Genomic_DNA"/>
</dbReference>
<dbReference type="EMBL" id="AAFI02000161">
    <property type="protein sequence ID" value="EAL62315.1"/>
    <property type="molecule type" value="Genomic_DNA"/>
</dbReference>
<dbReference type="RefSeq" id="XP_635841.1">
    <property type="nucleotide sequence ID" value="XM_630749.1"/>
</dbReference>
<dbReference type="SMR" id="Q6TMK3"/>
<dbReference type="FunCoup" id="Q6TMK3">
    <property type="interactions" value="1222"/>
</dbReference>
<dbReference type="STRING" id="44689.Q6TMK3"/>
<dbReference type="GlyGen" id="Q6TMK3">
    <property type="glycosylation" value="1 site"/>
</dbReference>
<dbReference type="PaxDb" id="44689-DDB0191276"/>
<dbReference type="EnsemblProtists" id="EAL62315">
    <property type="protein sequence ID" value="EAL62315"/>
    <property type="gene ID" value="DDB_G0290187"/>
</dbReference>
<dbReference type="GeneID" id="8627549"/>
<dbReference type="KEGG" id="ddi:DDB_G0290187"/>
<dbReference type="dictyBase" id="DDB_G0290187">
    <property type="gene designation" value="hspH"/>
</dbReference>
<dbReference type="VEuPathDB" id="AmoebaDB:DDB_G0290187"/>
<dbReference type="eggNOG" id="KOG0103">
    <property type="taxonomic scope" value="Eukaryota"/>
</dbReference>
<dbReference type="HOGENOM" id="CLU_005965_5_1_1"/>
<dbReference type="InParanoid" id="Q6TMK3"/>
<dbReference type="OMA" id="WEQSPEI"/>
<dbReference type="PhylomeDB" id="Q6TMK3"/>
<dbReference type="Reactome" id="R-DDI-3371453">
    <property type="pathway name" value="Regulation of HSF1-mediated heat shock response"/>
</dbReference>
<dbReference type="PRO" id="PR:Q6TMK3"/>
<dbReference type="Proteomes" id="UP000002195">
    <property type="component" value="Chromosome 5"/>
</dbReference>
<dbReference type="GO" id="GO:0005829">
    <property type="term" value="C:cytosol"/>
    <property type="evidence" value="ECO:0000318"/>
    <property type="project" value="GO_Central"/>
</dbReference>
<dbReference type="GO" id="GO:0005634">
    <property type="term" value="C:nucleus"/>
    <property type="evidence" value="ECO:0000318"/>
    <property type="project" value="GO_Central"/>
</dbReference>
<dbReference type="GO" id="GO:0045335">
    <property type="term" value="C:phagocytic vesicle"/>
    <property type="evidence" value="ECO:0007005"/>
    <property type="project" value="dictyBase"/>
</dbReference>
<dbReference type="GO" id="GO:0000774">
    <property type="term" value="F:adenyl-nucleotide exchange factor activity"/>
    <property type="evidence" value="ECO:0000318"/>
    <property type="project" value="GO_Central"/>
</dbReference>
<dbReference type="GO" id="GO:0005524">
    <property type="term" value="F:ATP binding"/>
    <property type="evidence" value="ECO:0007669"/>
    <property type="project" value="UniProtKB-KW"/>
</dbReference>
<dbReference type="GO" id="GO:0140662">
    <property type="term" value="F:ATP-dependent protein folding chaperone"/>
    <property type="evidence" value="ECO:0007669"/>
    <property type="project" value="InterPro"/>
</dbReference>
<dbReference type="GO" id="GO:0051082">
    <property type="term" value="F:unfolded protein binding"/>
    <property type="evidence" value="ECO:0000250"/>
    <property type="project" value="dictyBase"/>
</dbReference>
<dbReference type="GO" id="GO:0006457">
    <property type="term" value="P:protein folding"/>
    <property type="evidence" value="ECO:0000318"/>
    <property type="project" value="GO_Central"/>
</dbReference>
<dbReference type="CDD" id="cd24095">
    <property type="entry name" value="ASKHA_NBD_HSP70_AtHsp70-14-like"/>
    <property type="match status" value="1"/>
</dbReference>
<dbReference type="FunFam" id="1.20.1270.10:FF:000002">
    <property type="entry name" value="Heat shock 70 kDa protein 4"/>
    <property type="match status" value="1"/>
</dbReference>
<dbReference type="FunFam" id="3.30.30.30:FF:000002">
    <property type="entry name" value="Heat shock 70 kDa protein 4"/>
    <property type="match status" value="1"/>
</dbReference>
<dbReference type="FunFam" id="3.30.420.40:FF:000171">
    <property type="entry name" value="Heat shock 70 kDa protein 4"/>
    <property type="match status" value="2"/>
</dbReference>
<dbReference type="FunFam" id="3.90.640.10:FF:000004">
    <property type="entry name" value="Heat shock 70 kDa protein 4"/>
    <property type="match status" value="1"/>
</dbReference>
<dbReference type="Gene3D" id="1.20.1270.10">
    <property type="match status" value="1"/>
</dbReference>
<dbReference type="Gene3D" id="3.30.30.30">
    <property type="match status" value="1"/>
</dbReference>
<dbReference type="Gene3D" id="3.30.420.40">
    <property type="match status" value="2"/>
</dbReference>
<dbReference type="Gene3D" id="3.90.640.10">
    <property type="entry name" value="Actin, Chain A, domain 4"/>
    <property type="match status" value="1"/>
</dbReference>
<dbReference type="Gene3D" id="2.60.34.10">
    <property type="entry name" value="Substrate Binding Domain Of DNAk, Chain A, domain 1"/>
    <property type="match status" value="1"/>
</dbReference>
<dbReference type="InterPro" id="IPR043129">
    <property type="entry name" value="ATPase_NBD"/>
</dbReference>
<dbReference type="InterPro" id="IPR029048">
    <property type="entry name" value="HSP70_C_sf"/>
</dbReference>
<dbReference type="InterPro" id="IPR029047">
    <property type="entry name" value="HSP70_peptide-bd_sf"/>
</dbReference>
<dbReference type="InterPro" id="IPR013126">
    <property type="entry name" value="Hsp_70_fam"/>
</dbReference>
<dbReference type="PANTHER" id="PTHR45639:SF4">
    <property type="entry name" value="HSC70CB, ISOFORM G"/>
    <property type="match status" value="1"/>
</dbReference>
<dbReference type="PANTHER" id="PTHR45639">
    <property type="entry name" value="HSC70CB, ISOFORM G-RELATED"/>
    <property type="match status" value="1"/>
</dbReference>
<dbReference type="Pfam" id="PF00012">
    <property type="entry name" value="HSP70"/>
    <property type="match status" value="1"/>
</dbReference>
<dbReference type="PRINTS" id="PR00301">
    <property type="entry name" value="HEATSHOCK70"/>
</dbReference>
<dbReference type="SUPFAM" id="SSF53067">
    <property type="entry name" value="Actin-like ATPase domain"/>
    <property type="match status" value="2"/>
</dbReference>
<dbReference type="SUPFAM" id="SSF100934">
    <property type="entry name" value="Heat shock protein 70kD (HSP70), C-terminal subdomain"/>
    <property type="match status" value="2"/>
</dbReference>
<dbReference type="SUPFAM" id="SSF100920">
    <property type="entry name" value="Heat shock protein 70kD (HSP70), peptide-binding domain"/>
    <property type="match status" value="1"/>
</dbReference>